<reference key="1">
    <citation type="submission" date="2006-03" db="EMBL/GenBank/DDBJ databases">
        <title>Complete sequence of Shewanella denitrificans OS217.</title>
        <authorList>
            <consortium name="US DOE Joint Genome Institute"/>
            <person name="Copeland A."/>
            <person name="Lucas S."/>
            <person name="Lapidus A."/>
            <person name="Barry K."/>
            <person name="Detter J.C."/>
            <person name="Glavina del Rio T."/>
            <person name="Hammon N."/>
            <person name="Israni S."/>
            <person name="Dalin E."/>
            <person name="Tice H."/>
            <person name="Pitluck S."/>
            <person name="Brettin T."/>
            <person name="Bruce D."/>
            <person name="Han C."/>
            <person name="Tapia R."/>
            <person name="Gilna P."/>
            <person name="Kiss H."/>
            <person name="Schmutz J."/>
            <person name="Larimer F."/>
            <person name="Land M."/>
            <person name="Hauser L."/>
            <person name="Kyrpides N."/>
            <person name="Lykidis A."/>
            <person name="Richardson P."/>
        </authorList>
    </citation>
    <scope>NUCLEOTIDE SEQUENCE [LARGE SCALE GENOMIC DNA]</scope>
    <source>
        <strain>OS217 / ATCC BAA-1090 / DSM 15013</strain>
    </source>
</reference>
<sequence length="360" mass="39648">MLVYLAEYLTQFHTGFHVFSYVTFRAILGLLTALVFSLWCGPKLIRRLQLLQIGQVVRNDGPESHFSKRGTPTMGGLLILAGIFVSVLLWGDLESRYVLVMLFVLGSFGTIGFIDDYRKVVRKDTKGLIARWKYILQSLAALVVAVFLYSSSTLPGETQLVVPFFKDVMPQLGLVFIVLAYFTIVGASNAVNLTDGLDGLAIMPTVMVAGAFALIAYLSGHVQFANYLHIPHLPEAGELVIVCTAIVGAGLGFLWFNTYPAQVFMGDVGSLALGAALGAIAVLVRQEILLVIMGGVFVMETVSVILQVGSYKLRGQRIFRMAPIHHHYELKGWPEPRVIVRFWIISLFLVLLGLATLKLR</sequence>
<gene>
    <name evidence="1" type="primary">mraY</name>
    <name type="ordered locus">Sden_0352</name>
</gene>
<comment type="function">
    <text evidence="1">Catalyzes the initial step of the lipid cycle reactions in the biosynthesis of the cell wall peptidoglycan: transfers peptidoglycan precursor phospho-MurNAc-pentapeptide from UDP-MurNAc-pentapeptide onto the lipid carrier undecaprenyl phosphate, yielding undecaprenyl-pyrophosphoryl-MurNAc-pentapeptide, known as lipid I.</text>
</comment>
<comment type="catalytic activity">
    <reaction evidence="1">
        <text>UDP-N-acetyl-alpha-D-muramoyl-L-alanyl-gamma-D-glutamyl-meso-2,6-diaminopimeloyl-D-alanyl-D-alanine + di-trans,octa-cis-undecaprenyl phosphate = di-trans,octa-cis-undecaprenyl diphospho-N-acetyl-alpha-D-muramoyl-L-alanyl-D-glutamyl-meso-2,6-diaminopimeloyl-D-alanyl-D-alanine + UMP</text>
        <dbReference type="Rhea" id="RHEA:28386"/>
        <dbReference type="ChEBI" id="CHEBI:57865"/>
        <dbReference type="ChEBI" id="CHEBI:60392"/>
        <dbReference type="ChEBI" id="CHEBI:61386"/>
        <dbReference type="ChEBI" id="CHEBI:61387"/>
        <dbReference type="EC" id="2.7.8.13"/>
    </reaction>
</comment>
<comment type="cofactor">
    <cofactor evidence="1">
        <name>Mg(2+)</name>
        <dbReference type="ChEBI" id="CHEBI:18420"/>
    </cofactor>
</comment>
<comment type="pathway">
    <text evidence="1">Cell wall biogenesis; peptidoglycan biosynthesis.</text>
</comment>
<comment type="subcellular location">
    <subcellularLocation>
        <location evidence="1">Cell inner membrane</location>
        <topology evidence="1">Multi-pass membrane protein</topology>
    </subcellularLocation>
</comment>
<comment type="similarity">
    <text evidence="1">Belongs to the glycosyltransferase 4 family. MraY subfamily.</text>
</comment>
<accession>Q12SC9</accession>
<name>MRAY_SHEDO</name>
<keyword id="KW-0131">Cell cycle</keyword>
<keyword id="KW-0132">Cell division</keyword>
<keyword id="KW-0997">Cell inner membrane</keyword>
<keyword id="KW-1003">Cell membrane</keyword>
<keyword id="KW-0133">Cell shape</keyword>
<keyword id="KW-0961">Cell wall biogenesis/degradation</keyword>
<keyword id="KW-0460">Magnesium</keyword>
<keyword id="KW-0472">Membrane</keyword>
<keyword id="KW-0479">Metal-binding</keyword>
<keyword id="KW-0573">Peptidoglycan synthesis</keyword>
<keyword id="KW-1185">Reference proteome</keyword>
<keyword id="KW-0808">Transferase</keyword>
<keyword id="KW-0812">Transmembrane</keyword>
<keyword id="KW-1133">Transmembrane helix</keyword>
<protein>
    <recommendedName>
        <fullName evidence="1">Phospho-N-acetylmuramoyl-pentapeptide-transferase</fullName>
        <ecNumber evidence="1">2.7.8.13</ecNumber>
    </recommendedName>
    <alternativeName>
        <fullName evidence="1">UDP-MurNAc-pentapeptide phosphotransferase</fullName>
    </alternativeName>
</protein>
<evidence type="ECO:0000255" key="1">
    <source>
        <dbReference type="HAMAP-Rule" id="MF_00038"/>
    </source>
</evidence>
<proteinExistence type="inferred from homology"/>
<dbReference type="EC" id="2.7.8.13" evidence="1"/>
<dbReference type="EMBL" id="CP000302">
    <property type="protein sequence ID" value="ABE53647.1"/>
    <property type="molecule type" value="Genomic_DNA"/>
</dbReference>
<dbReference type="RefSeq" id="WP_011494814.1">
    <property type="nucleotide sequence ID" value="NC_007954.1"/>
</dbReference>
<dbReference type="SMR" id="Q12SC9"/>
<dbReference type="STRING" id="318161.Sden_0352"/>
<dbReference type="KEGG" id="sdn:Sden_0352"/>
<dbReference type="eggNOG" id="COG0472">
    <property type="taxonomic scope" value="Bacteria"/>
</dbReference>
<dbReference type="HOGENOM" id="CLU_023982_0_0_6"/>
<dbReference type="OrthoDB" id="9805475at2"/>
<dbReference type="UniPathway" id="UPA00219"/>
<dbReference type="Proteomes" id="UP000001982">
    <property type="component" value="Chromosome"/>
</dbReference>
<dbReference type="GO" id="GO:0005886">
    <property type="term" value="C:plasma membrane"/>
    <property type="evidence" value="ECO:0007669"/>
    <property type="project" value="UniProtKB-SubCell"/>
</dbReference>
<dbReference type="GO" id="GO:0046872">
    <property type="term" value="F:metal ion binding"/>
    <property type="evidence" value="ECO:0007669"/>
    <property type="project" value="UniProtKB-KW"/>
</dbReference>
<dbReference type="GO" id="GO:0008963">
    <property type="term" value="F:phospho-N-acetylmuramoyl-pentapeptide-transferase activity"/>
    <property type="evidence" value="ECO:0007669"/>
    <property type="project" value="UniProtKB-UniRule"/>
</dbReference>
<dbReference type="GO" id="GO:0051992">
    <property type="term" value="F:UDP-N-acetylmuramoyl-L-alanyl-D-glutamyl-meso-2,6-diaminopimelyl-D-alanyl-D-alanine:undecaprenyl-phosphate transferase activity"/>
    <property type="evidence" value="ECO:0007669"/>
    <property type="project" value="RHEA"/>
</dbReference>
<dbReference type="GO" id="GO:0051301">
    <property type="term" value="P:cell division"/>
    <property type="evidence" value="ECO:0007669"/>
    <property type="project" value="UniProtKB-KW"/>
</dbReference>
<dbReference type="GO" id="GO:0071555">
    <property type="term" value="P:cell wall organization"/>
    <property type="evidence" value="ECO:0007669"/>
    <property type="project" value="UniProtKB-KW"/>
</dbReference>
<dbReference type="GO" id="GO:0009252">
    <property type="term" value="P:peptidoglycan biosynthetic process"/>
    <property type="evidence" value="ECO:0007669"/>
    <property type="project" value="UniProtKB-UniRule"/>
</dbReference>
<dbReference type="GO" id="GO:0008360">
    <property type="term" value="P:regulation of cell shape"/>
    <property type="evidence" value="ECO:0007669"/>
    <property type="project" value="UniProtKB-KW"/>
</dbReference>
<dbReference type="CDD" id="cd06852">
    <property type="entry name" value="GT_MraY"/>
    <property type="match status" value="1"/>
</dbReference>
<dbReference type="HAMAP" id="MF_00038">
    <property type="entry name" value="MraY"/>
    <property type="match status" value="1"/>
</dbReference>
<dbReference type="InterPro" id="IPR000715">
    <property type="entry name" value="Glycosyl_transferase_4"/>
</dbReference>
<dbReference type="InterPro" id="IPR003524">
    <property type="entry name" value="PNAcMuramoyl-5peptid_Trfase"/>
</dbReference>
<dbReference type="InterPro" id="IPR018480">
    <property type="entry name" value="PNAcMuramoyl-5peptid_Trfase_CS"/>
</dbReference>
<dbReference type="NCBIfam" id="TIGR00445">
    <property type="entry name" value="mraY"/>
    <property type="match status" value="1"/>
</dbReference>
<dbReference type="PANTHER" id="PTHR22926">
    <property type="entry name" value="PHOSPHO-N-ACETYLMURAMOYL-PENTAPEPTIDE-TRANSFERASE"/>
    <property type="match status" value="1"/>
</dbReference>
<dbReference type="PANTHER" id="PTHR22926:SF5">
    <property type="entry name" value="PHOSPHO-N-ACETYLMURAMOYL-PENTAPEPTIDE-TRANSFERASE HOMOLOG"/>
    <property type="match status" value="1"/>
</dbReference>
<dbReference type="Pfam" id="PF00953">
    <property type="entry name" value="Glycos_transf_4"/>
    <property type="match status" value="1"/>
</dbReference>
<dbReference type="Pfam" id="PF10555">
    <property type="entry name" value="MraY_sig1"/>
    <property type="match status" value="1"/>
</dbReference>
<dbReference type="PROSITE" id="PS01347">
    <property type="entry name" value="MRAY_1"/>
    <property type="match status" value="1"/>
</dbReference>
<dbReference type="PROSITE" id="PS01348">
    <property type="entry name" value="MRAY_2"/>
    <property type="match status" value="1"/>
</dbReference>
<feature type="chain" id="PRO_1000003057" description="Phospho-N-acetylmuramoyl-pentapeptide-transferase">
    <location>
        <begin position="1"/>
        <end position="360"/>
    </location>
</feature>
<feature type="transmembrane region" description="Helical" evidence="1">
    <location>
        <begin position="18"/>
        <end position="38"/>
    </location>
</feature>
<feature type="transmembrane region" description="Helical" evidence="1">
    <location>
        <begin position="73"/>
        <end position="93"/>
    </location>
</feature>
<feature type="transmembrane region" description="Helical" evidence="1">
    <location>
        <begin position="97"/>
        <end position="117"/>
    </location>
</feature>
<feature type="transmembrane region" description="Helical" evidence="1">
    <location>
        <begin position="134"/>
        <end position="154"/>
    </location>
</feature>
<feature type="transmembrane region" description="Helical" evidence="1">
    <location>
        <begin position="168"/>
        <end position="188"/>
    </location>
</feature>
<feature type="transmembrane region" description="Helical" evidence="1">
    <location>
        <begin position="199"/>
        <end position="219"/>
    </location>
</feature>
<feature type="transmembrane region" description="Helical" evidence="1">
    <location>
        <begin position="236"/>
        <end position="256"/>
    </location>
</feature>
<feature type="transmembrane region" description="Helical" evidence="1">
    <location>
        <begin position="263"/>
        <end position="283"/>
    </location>
</feature>
<feature type="transmembrane region" description="Helical" evidence="1">
    <location>
        <begin position="288"/>
        <end position="308"/>
    </location>
</feature>
<feature type="transmembrane region" description="Helical" evidence="1">
    <location>
        <begin position="338"/>
        <end position="358"/>
    </location>
</feature>
<organism>
    <name type="scientific">Shewanella denitrificans (strain OS217 / ATCC BAA-1090 / DSM 15013)</name>
    <dbReference type="NCBI Taxonomy" id="318161"/>
    <lineage>
        <taxon>Bacteria</taxon>
        <taxon>Pseudomonadati</taxon>
        <taxon>Pseudomonadota</taxon>
        <taxon>Gammaproteobacteria</taxon>
        <taxon>Alteromonadales</taxon>
        <taxon>Shewanellaceae</taxon>
        <taxon>Shewanella</taxon>
    </lineage>
</organism>